<keyword id="KW-0256">Endoplasmic reticulum</keyword>
<keyword id="KW-0325">Glycoprotein</keyword>
<keyword id="KW-0378">Hydrolase</keyword>
<keyword id="KW-0472">Membrane</keyword>
<keyword id="KW-0653">Protein transport</keyword>
<keyword id="KW-1185">Reference proteome</keyword>
<keyword id="KW-0812">Transmembrane</keyword>
<keyword id="KW-1133">Transmembrane helix</keyword>
<keyword id="KW-0813">Transport</keyword>
<feature type="chain" id="PRO_0000277638" description="GPI inositol-deacylase">
    <location>
        <begin position="1"/>
        <end position="1140"/>
    </location>
</feature>
<feature type="transmembrane region" description="Helical" evidence="2">
    <location>
        <begin position="117"/>
        <end position="137"/>
    </location>
</feature>
<feature type="transmembrane region" description="Helical" evidence="2">
    <location>
        <begin position="782"/>
        <end position="802"/>
    </location>
</feature>
<feature type="transmembrane region" description="Helical" evidence="2">
    <location>
        <begin position="882"/>
        <end position="902"/>
    </location>
</feature>
<feature type="transmembrane region" description="Helical" evidence="2">
    <location>
        <begin position="905"/>
        <end position="925"/>
    </location>
</feature>
<feature type="transmembrane region" description="Helical" evidence="2">
    <location>
        <begin position="952"/>
        <end position="972"/>
    </location>
</feature>
<feature type="transmembrane region" description="Helical" evidence="2">
    <location>
        <begin position="1002"/>
        <end position="1022"/>
    </location>
</feature>
<feature type="transmembrane region" description="Helical" evidence="2">
    <location>
        <begin position="1039"/>
        <end position="1059"/>
    </location>
</feature>
<feature type="transmembrane region" description="Helical" evidence="2">
    <location>
        <begin position="1070"/>
        <end position="1090"/>
    </location>
</feature>
<feature type="transmembrane region" description="Helical" evidence="2">
    <location>
        <begin position="1094"/>
        <end position="1114"/>
    </location>
</feature>
<feature type="region of interest" description="Disordered" evidence="3">
    <location>
        <begin position="1"/>
        <end position="84"/>
    </location>
</feature>
<feature type="compositionally biased region" description="Polar residues" evidence="3">
    <location>
        <begin position="55"/>
        <end position="78"/>
    </location>
</feature>
<feature type="active site" evidence="1">
    <location>
        <position position="304"/>
    </location>
</feature>
<feature type="glycosylation site" description="N-linked (GlcNAc...) asparagine" evidence="2">
    <location>
        <position position="63"/>
    </location>
</feature>
<feature type="glycosylation site" description="N-linked (GlcNAc...) asparagine" evidence="2">
    <location>
        <position position="862"/>
    </location>
</feature>
<sequence>MHRRSSGSSPDADDAEDSLASRSSEPSHGCELPEKPLPEIARTGTSIDLRRDTNGKSTPRSRNSSTWRTLSSATTTWASHDPPRYPAVMITPQRLAIEASPDSPHRSRLARLRSPWSCSILTALTTILACVFLFSIVRSFSALQTGSDGCGVPVMSPTFLRMVGFDTEHTRFASKYNLFLYREEGVDPYNHENLGLNGAPVLFLPGNAGSYRQVRSLAAEASRHYAQVVQHDQERLRAGTRSLDFFMIDFNEDMAAFHGQTLLDQAEYVNEAVAYILSLYHDPRRTRRDADLPDPSSVILIGHSMGGIVARTALTMANYQENSVNTIITMSAPHAKAPVSFDSDIVHTYKQINDYWREAYSQTWANNNPLWHVTLISIAGGSRDTVVPSDYASISSLVPETHGFTVFTSTMPDVWIGVDHLSITWCDQFRKAIIKSLFDVVDVRRASQTKPRAERMRIFKKWYLTGLESVSERMLTRNEPSTLVTLEDHTNTILAQGQRLVLRELGHRTGPNVHLLPVPPQGVSGKKFTLLTDQRLDRTGEQGSLEVLFCSVFPLHNGKASSVFALNMDSSDSSGSTRLACKNAAVDEIHLPASTRTSRNAYDRARPFSYLQYDLEDLAEHQFVAVVDKARVPMKGWAIAEFSDSSDALIKARIGLGGLLSAGLKVRLPANRPMLTEVRIPALYSSLLDYKLRVVRHHQAGDPRELFAPLLRQSIADPHESKFFVNVDKVNVNLHGLAPYMPPPLRQTSQNGVSFQLWTDPTCDSTVDITLTVDIVSSLGELVMRYRTVFAAFPLLVVSLTLRKQFQVYDETGFFITFAEGLDSALRSSMPALLLAMSLLASSLATSTKLPTGDDPFHWATNSTETPIDFTKNDLLLGSQDAFFWFLVPLFGLICVGVCVLLNYVALIVLQILSVVYGLWNSKSGYIRRDEKGYLPVFPAPSPRRRMIKMGVLLVLVSTAIPYQFAYLVACIVQLATCVRAQWHAKETRSTAHYNFANYAYSVFILMLWVLPINILVLLVWAHNLVVHWFMPFSSHHNVLSIMPFIILVETMTTGSMIPRVTTRFKHVTSVLLFCIAVYSAVYGVSYAYISHHLVNILAGWLVSIYFFRSGFSLHRFWKIVEGDETPSTPESGSHMKKKP</sequence>
<comment type="function">
    <text evidence="1">Involved in inositol deacylation of GPI-anchored proteins which plays important roles in the quality control and ER-associated degradation of GPI-anchored proteins.</text>
</comment>
<comment type="subcellular location">
    <subcellularLocation>
        <location evidence="1">Endoplasmic reticulum membrane</location>
        <topology evidence="1">Multi-pass membrane protein</topology>
    </subcellularLocation>
</comment>
<comment type="similarity">
    <text evidence="4">Belongs to the GPI inositol-deacylase family.</text>
</comment>
<comment type="sequence caution" evidence="4">
    <conflict type="erroneous initiation">
        <sequence resource="EMBL-CDS" id="CBF71281"/>
    </conflict>
    <text>Extended N-terminus.</text>
</comment>
<comment type="sequence caution" evidence="4">
    <conflict type="erroneous initiation">
        <sequence resource="EMBL-CDS" id="EAA58520"/>
    </conflict>
    <text>Extended N-terminus.</text>
</comment>
<gene>
    <name type="primary">bst1</name>
    <name type="ORF">AN6702</name>
</gene>
<evidence type="ECO:0000250" key="1"/>
<evidence type="ECO:0000255" key="2"/>
<evidence type="ECO:0000256" key="3">
    <source>
        <dbReference type="SAM" id="MobiDB-lite"/>
    </source>
</evidence>
<evidence type="ECO:0000305" key="4"/>
<proteinExistence type="inferred from homology"/>
<dbReference type="EC" id="3.1.-.-"/>
<dbReference type="EMBL" id="AACD01000112">
    <property type="protein sequence ID" value="EAA58520.1"/>
    <property type="status" value="ALT_INIT"/>
    <property type="molecule type" value="Genomic_DNA"/>
</dbReference>
<dbReference type="EMBL" id="BN001301">
    <property type="protein sequence ID" value="CBF71281.1"/>
    <property type="status" value="ALT_INIT"/>
    <property type="molecule type" value="Genomic_DNA"/>
</dbReference>
<dbReference type="RefSeq" id="XP_664306.1">
    <property type="nucleotide sequence ID" value="XM_659214.1"/>
</dbReference>
<dbReference type="SMR" id="Q5AYC8"/>
<dbReference type="FunCoup" id="Q5AYC8">
    <property type="interactions" value="49"/>
</dbReference>
<dbReference type="STRING" id="227321.Q5AYC8"/>
<dbReference type="ESTHER" id="emeni-BST1">
    <property type="family name" value="PGAP1"/>
</dbReference>
<dbReference type="GlyCosmos" id="Q5AYC8">
    <property type="glycosylation" value="2 sites, No reported glycans"/>
</dbReference>
<dbReference type="KEGG" id="ani:ANIA_06702"/>
<dbReference type="VEuPathDB" id="FungiDB:AN6702"/>
<dbReference type="eggNOG" id="KOG3724">
    <property type="taxonomic scope" value="Eukaryota"/>
</dbReference>
<dbReference type="HOGENOM" id="CLU_006103_1_0_1"/>
<dbReference type="InParanoid" id="Q5AYC8"/>
<dbReference type="OrthoDB" id="348976at2759"/>
<dbReference type="Proteomes" id="UP000000560">
    <property type="component" value="Chromosome I"/>
</dbReference>
<dbReference type="GO" id="GO:0005783">
    <property type="term" value="C:endoplasmic reticulum"/>
    <property type="evidence" value="ECO:0000318"/>
    <property type="project" value="GO_Central"/>
</dbReference>
<dbReference type="GO" id="GO:0005789">
    <property type="term" value="C:endoplasmic reticulum membrane"/>
    <property type="evidence" value="ECO:0007669"/>
    <property type="project" value="UniProtKB-SubCell"/>
</dbReference>
<dbReference type="GO" id="GO:0050185">
    <property type="term" value="F:phosphatidylinositol deacylase activity"/>
    <property type="evidence" value="ECO:0000318"/>
    <property type="project" value="GO_Central"/>
</dbReference>
<dbReference type="GO" id="GO:0006506">
    <property type="term" value="P:GPI anchor biosynthetic process"/>
    <property type="evidence" value="ECO:0000318"/>
    <property type="project" value="GO_Central"/>
</dbReference>
<dbReference type="GO" id="GO:0015031">
    <property type="term" value="P:protein transport"/>
    <property type="evidence" value="ECO:0007669"/>
    <property type="project" value="UniProtKB-KW"/>
</dbReference>
<dbReference type="FunFam" id="3.40.50.1820:FF:000056">
    <property type="entry name" value="GPI inositol-deacylase"/>
    <property type="match status" value="1"/>
</dbReference>
<dbReference type="Gene3D" id="3.40.50.1820">
    <property type="entry name" value="alpha/beta hydrolase"/>
    <property type="match status" value="1"/>
</dbReference>
<dbReference type="InterPro" id="IPR029058">
    <property type="entry name" value="AB_hydrolase_fold"/>
</dbReference>
<dbReference type="InterPro" id="IPR012908">
    <property type="entry name" value="PGAP1-ab_dom-like"/>
</dbReference>
<dbReference type="InterPro" id="IPR039529">
    <property type="entry name" value="PGAP1/BST1"/>
</dbReference>
<dbReference type="InterPro" id="IPR056824">
    <property type="entry name" value="PGAP1_TMD"/>
</dbReference>
<dbReference type="PANTHER" id="PTHR15495:SF7">
    <property type="entry name" value="GPI INOSITOL-DEACYLASE"/>
    <property type="match status" value="1"/>
</dbReference>
<dbReference type="PANTHER" id="PTHR15495">
    <property type="entry name" value="NEGATIVE REGULATOR OF VESICLE FORMATION-RELATED"/>
    <property type="match status" value="1"/>
</dbReference>
<dbReference type="Pfam" id="PF07819">
    <property type="entry name" value="PGAP1"/>
    <property type="match status" value="1"/>
</dbReference>
<dbReference type="Pfam" id="PF25141">
    <property type="entry name" value="PGAP1_2nd"/>
    <property type="match status" value="1"/>
</dbReference>
<dbReference type="Pfam" id="PF25140">
    <property type="entry name" value="PGAP1_TMD"/>
    <property type="match status" value="1"/>
</dbReference>
<dbReference type="SUPFAM" id="SSF53474">
    <property type="entry name" value="alpha/beta-Hydrolases"/>
    <property type="match status" value="1"/>
</dbReference>
<dbReference type="PROSITE" id="PS00120">
    <property type="entry name" value="LIPASE_SER"/>
    <property type="match status" value="1"/>
</dbReference>
<name>BST1_EMENI</name>
<reference key="1">
    <citation type="journal article" date="2005" name="Nature">
        <title>Sequencing of Aspergillus nidulans and comparative analysis with A. fumigatus and A. oryzae.</title>
        <authorList>
            <person name="Galagan J.E."/>
            <person name="Calvo S.E."/>
            <person name="Cuomo C."/>
            <person name="Ma L.-J."/>
            <person name="Wortman J.R."/>
            <person name="Batzoglou S."/>
            <person name="Lee S.-I."/>
            <person name="Bastuerkmen M."/>
            <person name="Spevak C.C."/>
            <person name="Clutterbuck J."/>
            <person name="Kapitonov V."/>
            <person name="Jurka J."/>
            <person name="Scazzocchio C."/>
            <person name="Farman M.L."/>
            <person name="Butler J."/>
            <person name="Purcell S."/>
            <person name="Harris S."/>
            <person name="Braus G.H."/>
            <person name="Draht O."/>
            <person name="Busch S."/>
            <person name="D'Enfert C."/>
            <person name="Bouchier C."/>
            <person name="Goldman G.H."/>
            <person name="Bell-Pedersen D."/>
            <person name="Griffiths-Jones S."/>
            <person name="Doonan J.H."/>
            <person name="Yu J."/>
            <person name="Vienken K."/>
            <person name="Pain A."/>
            <person name="Freitag M."/>
            <person name="Selker E.U."/>
            <person name="Archer D.B."/>
            <person name="Penalva M.A."/>
            <person name="Oakley B.R."/>
            <person name="Momany M."/>
            <person name="Tanaka T."/>
            <person name="Kumagai T."/>
            <person name="Asai K."/>
            <person name="Machida M."/>
            <person name="Nierman W.C."/>
            <person name="Denning D.W."/>
            <person name="Caddick M.X."/>
            <person name="Hynes M."/>
            <person name="Paoletti M."/>
            <person name="Fischer R."/>
            <person name="Miller B.L."/>
            <person name="Dyer P.S."/>
            <person name="Sachs M.S."/>
            <person name="Osmani S.A."/>
            <person name="Birren B.W."/>
        </authorList>
    </citation>
    <scope>NUCLEOTIDE SEQUENCE [LARGE SCALE GENOMIC DNA]</scope>
    <source>
        <strain>FGSC A4 / ATCC 38163 / CBS 112.46 / NRRL 194 / M139</strain>
    </source>
</reference>
<reference key="2">
    <citation type="journal article" date="2009" name="Fungal Genet. Biol.">
        <title>The 2008 update of the Aspergillus nidulans genome annotation: a community effort.</title>
        <authorList>
            <person name="Wortman J.R."/>
            <person name="Gilsenan J.M."/>
            <person name="Joardar V."/>
            <person name="Deegan J."/>
            <person name="Clutterbuck J."/>
            <person name="Andersen M.R."/>
            <person name="Archer D."/>
            <person name="Bencina M."/>
            <person name="Braus G."/>
            <person name="Coutinho P."/>
            <person name="von Dohren H."/>
            <person name="Doonan J."/>
            <person name="Driessen A.J."/>
            <person name="Durek P."/>
            <person name="Espeso E."/>
            <person name="Fekete E."/>
            <person name="Flipphi M."/>
            <person name="Estrada C.G."/>
            <person name="Geysens S."/>
            <person name="Goldman G."/>
            <person name="de Groot P.W."/>
            <person name="Hansen K."/>
            <person name="Harris S.D."/>
            <person name="Heinekamp T."/>
            <person name="Helmstaedt K."/>
            <person name="Henrissat B."/>
            <person name="Hofmann G."/>
            <person name="Homan T."/>
            <person name="Horio T."/>
            <person name="Horiuchi H."/>
            <person name="James S."/>
            <person name="Jones M."/>
            <person name="Karaffa L."/>
            <person name="Karanyi Z."/>
            <person name="Kato M."/>
            <person name="Keller N."/>
            <person name="Kelly D.E."/>
            <person name="Kiel J.A."/>
            <person name="Kim J.M."/>
            <person name="van der Klei I.J."/>
            <person name="Klis F.M."/>
            <person name="Kovalchuk A."/>
            <person name="Krasevec N."/>
            <person name="Kubicek C.P."/>
            <person name="Liu B."/>
            <person name="Maccabe A."/>
            <person name="Meyer V."/>
            <person name="Mirabito P."/>
            <person name="Miskei M."/>
            <person name="Mos M."/>
            <person name="Mullins J."/>
            <person name="Nelson D.R."/>
            <person name="Nielsen J."/>
            <person name="Oakley B.R."/>
            <person name="Osmani S.A."/>
            <person name="Pakula T."/>
            <person name="Paszewski A."/>
            <person name="Paulsen I."/>
            <person name="Pilsyk S."/>
            <person name="Pocsi I."/>
            <person name="Punt P.J."/>
            <person name="Ram A.F."/>
            <person name="Ren Q."/>
            <person name="Robellet X."/>
            <person name="Robson G."/>
            <person name="Seiboth B."/>
            <person name="van Solingen P."/>
            <person name="Specht T."/>
            <person name="Sun J."/>
            <person name="Taheri-Talesh N."/>
            <person name="Takeshita N."/>
            <person name="Ussery D."/>
            <person name="vanKuyk P.A."/>
            <person name="Visser H."/>
            <person name="van de Vondervoort P.J."/>
            <person name="de Vries R.P."/>
            <person name="Walton J."/>
            <person name="Xiang X."/>
            <person name="Xiong Y."/>
            <person name="Zeng A.P."/>
            <person name="Brandt B.W."/>
            <person name="Cornell M.J."/>
            <person name="van den Hondel C.A."/>
            <person name="Visser J."/>
            <person name="Oliver S.G."/>
            <person name="Turner G."/>
        </authorList>
    </citation>
    <scope>GENOME REANNOTATION</scope>
    <source>
        <strain>FGSC A4 / ATCC 38163 / CBS 112.46 / NRRL 194 / M139</strain>
    </source>
</reference>
<accession>Q5AYC8</accession>
<accession>C8V1N9</accession>
<organism>
    <name type="scientific">Emericella nidulans (strain FGSC A4 / ATCC 38163 / CBS 112.46 / NRRL 194 / M139)</name>
    <name type="common">Aspergillus nidulans</name>
    <dbReference type="NCBI Taxonomy" id="227321"/>
    <lineage>
        <taxon>Eukaryota</taxon>
        <taxon>Fungi</taxon>
        <taxon>Dikarya</taxon>
        <taxon>Ascomycota</taxon>
        <taxon>Pezizomycotina</taxon>
        <taxon>Eurotiomycetes</taxon>
        <taxon>Eurotiomycetidae</taxon>
        <taxon>Eurotiales</taxon>
        <taxon>Aspergillaceae</taxon>
        <taxon>Aspergillus</taxon>
        <taxon>Aspergillus subgen. Nidulantes</taxon>
    </lineage>
</organism>
<protein>
    <recommendedName>
        <fullName>GPI inositol-deacylase</fullName>
        <ecNumber>3.1.-.-</ecNumber>
    </recommendedName>
</protein>